<organism>
    <name type="scientific">Bos taurus</name>
    <name type="common">Bovine</name>
    <dbReference type="NCBI Taxonomy" id="9913"/>
    <lineage>
        <taxon>Eukaryota</taxon>
        <taxon>Metazoa</taxon>
        <taxon>Chordata</taxon>
        <taxon>Craniata</taxon>
        <taxon>Vertebrata</taxon>
        <taxon>Euteleostomi</taxon>
        <taxon>Mammalia</taxon>
        <taxon>Eutheria</taxon>
        <taxon>Laurasiatheria</taxon>
        <taxon>Artiodactyla</taxon>
        <taxon>Ruminantia</taxon>
        <taxon>Pecora</taxon>
        <taxon>Bovidae</taxon>
        <taxon>Bovinae</taxon>
        <taxon>Bos</taxon>
    </lineage>
</organism>
<sequence>MELPEPELIRQSWREVSRSPLEHGTVLFARLFDLEPDLLPLFQYNCRQFSSPEDCLSSPEFLDHIRKVMLVIDAAVTNVEDLSSLEEYLAGLGRKHRAVGVKLSSFSTVGESLLYMLEKCLGPAFTPATRAAWSQLYGAVVQAMSRGWGGE</sequence>
<protein>
    <recommendedName>
        <fullName evidence="4">Neuroglobin</fullName>
    </recommendedName>
    <alternativeName>
        <fullName evidence="2">Nitrite reductase</fullName>
        <ecNumber evidence="2">1.7.-.-</ecNumber>
    </alternativeName>
</protein>
<evidence type="ECO:0000250" key="1">
    <source>
        <dbReference type="UniProtKB" id="Q9ER97"/>
    </source>
</evidence>
<evidence type="ECO:0000250" key="2">
    <source>
        <dbReference type="UniProtKB" id="Q9NPG2"/>
    </source>
</evidence>
<evidence type="ECO:0000255" key="3">
    <source>
        <dbReference type="PROSITE-ProRule" id="PRU00238"/>
    </source>
</evidence>
<evidence type="ECO:0000303" key="4">
    <source>
    </source>
</evidence>
<keyword id="KW-0963">Cytoplasm</keyword>
<keyword id="KW-1015">Disulfide bond</keyword>
<keyword id="KW-0349">Heme</keyword>
<keyword id="KW-0408">Iron</keyword>
<keyword id="KW-0479">Metal-binding</keyword>
<keyword id="KW-0496">Mitochondrion</keyword>
<keyword id="KW-0560">Oxidoreductase</keyword>
<keyword id="KW-1185">Reference proteome</keyword>
<feature type="chain" id="PRO_0000053388" description="Neuroglobin">
    <location>
        <begin position="1"/>
        <end position="151"/>
    </location>
</feature>
<feature type="domain" description="Globin" evidence="3">
    <location>
        <begin position="1"/>
        <end position="149"/>
    </location>
</feature>
<feature type="binding site" description="distal binding residue; reversible" evidence="2 3">
    <location>
        <position position="64"/>
    </location>
    <ligand>
        <name>heme b</name>
        <dbReference type="ChEBI" id="CHEBI:60344"/>
    </ligand>
    <ligandPart>
        <name>Fe</name>
        <dbReference type="ChEBI" id="CHEBI:18248"/>
    </ligandPart>
</feature>
<feature type="binding site" description="proximal binding residue" evidence="2 3">
    <location>
        <position position="96"/>
    </location>
    <ligand>
        <name>heme b</name>
        <dbReference type="ChEBI" id="CHEBI:60344"/>
    </ligand>
    <ligandPart>
        <name>Fe</name>
        <dbReference type="ChEBI" id="CHEBI:18248"/>
    </ligandPart>
</feature>
<accession>Q6WZ19</accession>
<accession>Q6KC88</accession>
<gene>
    <name evidence="2" type="primary">NGB</name>
</gene>
<reference key="1">
    <citation type="journal article" date="2004" name="IUBMB Life">
        <title>Neuroglobin and cytoglobin: genes, proteins and evolution.</title>
        <authorList>
            <person name="Burmester T."/>
            <person name="Haberkamp M."/>
            <person name="Mitz S."/>
            <person name="Roesner A."/>
            <person name="Schmidt M."/>
            <person name="Ebner B."/>
            <person name="Gerlach F."/>
            <person name="Fuchs C."/>
            <person name="Hankeln T."/>
        </authorList>
    </citation>
    <scope>NUCLEOTIDE SEQUENCE [MRNA]</scope>
    <source>
        <tissue>Brain</tissue>
    </source>
</reference>
<dbReference type="EC" id="1.7.-.-" evidence="2"/>
<dbReference type="EMBL" id="AJ635234">
    <property type="protein sequence ID" value="CAG25616.2"/>
    <property type="molecule type" value="mRNA"/>
</dbReference>
<dbReference type="RefSeq" id="NP_001001853.1">
    <property type="nucleotide sequence ID" value="NM_001001853.1"/>
</dbReference>
<dbReference type="SMR" id="Q6WZ19"/>
<dbReference type="FunCoup" id="Q6WZ19">
    <property type="interactions" value="325"/>
</dbReference>
<dbReference type="STRING" id="9913.ENSBTAP00000021661"/>
<dbReference type="PaxDb" id="9913-ENSBTAP00000021661"/>
<dbReference type="Ensembl" id="ENSBTAT00000021661.4">
    <property type="protein sequence ID" value="ENSBTAP00000021661.2"/>
    <property type="gene ID" value="ENSBTAG00000016285.4"/>
</dbReference>
<dbReference type="GeneID" id="414920"/>
<dbReference type="KEGG" id="bta:414920"/>
<dbReference type="CTD" id="58157"/>
<dbReference type="VEuPathDB" id="HostDB:ENSBTAG00000016285"/>
<dbReference type="VGNC" id="VGNC:32058">
    <property type="gene designation" value="NGB"/>
</dbReference>
<dbReference type="eggNOG" id="KOG3378">
    <property type="taxonomic scope" value="Eukaryota"/>
</dbReference>
<dbReference type="GeneTree" id="ENSGT00510000048375"/>
<dbReference type="HOGENOM" id="CLU_003827_13_5_1"/>
<dbReference type="InParanoid" id="Q6WZ19"/>
<dbReference type="OMA" id="GRKLMAM"/>
<dbReference type="OrthoDB" id="436496at2759"/>
<dbReference type="TreeFam" id="TF333247"/>
<dbReference type="Reactome" id="R-BTA-8981607">
    <property type="pathway name" value="Intracellular oxygen transport"/>
</dbReference>
<dbReference type="Proteomes" id="UP000009136">
    <property type="component" value="Chromosome 10"/>
</dbReference>
<dbReference type="Bgee" id="ENSBTAG00000016285">
    <property type="expression patterns" value="Expressed in hypothalamus and 54 other cell types or tissues"/>
</dbReference>
<dbReference type="GO" id="GO:0005829">
    <property type="term" value="C:cytosol"/>
    <property type="evidence" value="ECO:0007669"/>
    <property type="project" value="UniProtKB-SubCell"/>
</dbReference>
<dbReference type="GO" id="GO:0005759">
    <property type="term" value="C:mitochondrial matrix"/>
    <property type="evidence" value="ECO:0007669"/>
    <property type="project" value="UniProtKB-SubCell"/>
</dbReference>
<dbReference type="GO" id="GO:0005092">
    <property type="term" value="F:GDP-dissociation inhibitor activity"/>
    <property type="evidence" value="ECO:0000250"/>
    <property type="project" value="UniProtKB"/>
</dbReference>
<dbReference type="GO" id="GO:0020037">
    <property type="term" value="F:heme binding"/>
    <property type="evidence" value="ECO:0007669"/>
    <property type="project" value="InterPro"/>
</dbReference>
<dbReference type="GO" id="GO:0046872">
    <property type="term" value="F:metal ion binding"/>
    <property type="evidence" value="ECO:0007669"/>
    <property type="project" value="UniProtKB-KW"/>
</dbReference>
<dbReference type="GO" id="GO:0098809">
    <property type="term" value="F:nitrite reductase activity"/>
    <property type="evidence" value="ECO:0000250"/>
    <property type="project" value="UniProtKB"/>
</dbReference>
<dbReference type="GO" id="GO:0019825">
    <property type="term" value="F:oxygen binding"/>
    <property type="evidence" value="ECO:0000250"/>
    <property type="project" value="UniProtKB"/>
</dbReference>
<dbReference type="GO" id="GO:0005344">
    <property type="term" value="F:oxygen carrier activity"/>
    <property type="evidence" value="ECO:0000318"/>
    <property type="project" value="GO_Central"/>
</dbReference>
<dbReference type="GO" id="GO:0071456">
    <property type="term" value="P:cellular response to hypoxia"/>
    <property type="evidence" value="ECO:0000250"/>
    <property type="project" value="UniProtKB"/>
</dbReference>
<dbReference type="GO" id="GO:0015671">
    <property type="term" value="P:oxygen transport"/>
    <property type="evidence" value="ECO:0000318"/>
    <property type="project" value="GO_Central"/>
</dbReference>
<dbReference type="GO" id="GO:0001666">
    <property type="term" value="P:response to hypoxia"/>
    <property type="evidence" value="ECO:0000318"/>
    <property type="project" value="GO_Central"/>
</dbReference>
<dbReference type="CDD" id="cd08920">
    <property type="entry name" value="Ngb"/>
    <property type="match status" value="1"/>
</dbReference>
<dbReference type="FunFam" id="1.10.490.10:FF:000006">
    <property type="entry name" value="Neuroglobin"/>
    <property type="match status" value="1"/>
</dbReference>
<dbReference type="Gene3D" id="1.10.490.10">
    <property type="entry name" value="Globins"/>
    <property type="match status" value="1"/>
</dbReference>
<dbReference type="InterPro" id="IPR000971">
    <property type="entry name" value="Globin"/>
</dbReference>
<dbReference type="InterPro" id="IPR050532">
    <property type="entry name" value="Globin-like_OT"/>
</dbReference>
<dbReference type="InterPro" id="IPR009050">
    <property type="entry name" value="Globin-like_sf"/>
</dbReference>
<dbReference type="InterPro" id="IPR012292">
    <property type="entry name" value="Globin/Proto"/>
</dbReference>
<dbReference type="PANTHER" id="PTHR46458">
    <property type="entry name" value="BLR2807 PROTEIN"/>
    <property type="match status" value="1"/>
</dbReference>
<dbReference type="PANTHER" id="PTHR46458:SF19">
    <property type="entry name" value="NEUROGLOBIN"/>
    <property type="match status" value="1"/>
</dbReference>
<dbReference type="Pfam" id="PF00042">
    <property type="entry name" value="Globin"/>
    <property type="match status" value="1"/>
</dbReference>
<dbReference type="SUPFAM" id="SSF46458">
    <property type="entry name" value="Globin-like"/>
    <property type="match status" value="1"/>
</dbReference>
<dbReference type="PROSITE" id="PS01033">
    <property type="entry name" value="GLOBIN"/>
    <property type="match status" value="1"/>
</dbReference>
<name>NGB_BOVIN</name>
<proteinExistence type="evidence at transcript level"/>
<comment type="function">
    <text evidence="2">Monomeric globin with a bis-histidyl six-coordinate heme-iron atom through which it can bind dioxygen, carbon monoxide and nitric oxide. Could help transport oxygen and increase its availability to the metabolically active neuronal tissues, though its low quantity in tissues as well as its high affinity for dioxygen, which may limit its oxygen-releasing ability, argue against it. The ferrous/deoxygenated form exhibits a nitrite reductase activity and it could produce nitric oxide which in turn inhibits cellular respiration in response to hypoxia. In its ferrous/deoxygenated state, it may also exhibit GDI (Guanine nucleotide Dissociation Inhibitor) activity toward heterotrimeric G-alpha proteins, thereby regulating signal transduction to facilitate neuroprotective responses in the wake of hypoxia and associated oxidative stress.</text>
</comment>
<comment type="catalytic activity">
    <reaction evidence="2">
        <text>Fe(III)-heme b-[protein] + nitric oxide + H2O = Fe(II)-heme b-[protein] + nitrite + 2 H(+)</text>
        <dbReference type="Rhea" id="RHEA:77711"/>
        <dbReference type="Rhea" id="RHEA-COMP:18975"/>
        <dbReference type="Rhea" id="RHEA-COMP:18976"/>
        <dbReference type="ChEBI" id="CHEBI:15377"/>
        <dbReference type="ChEBI" id="CHEBI:15378"/>
        <dbReference type="ChEBI" id="CHEBI:16301"/>
        <dbReference type="ChEBI" id="CHEBI:16480"/>
        <dbReference type="ChEBI" id="CHEBI:55376"/>
        <dbReference type="ChEBI" id="CHEBI:60344"/>
    </reaction>
    <physiologicalReaction direction="right-to-left" evidence="2">
        <dbReference type="Rhea" id="RHEA:77713"/>
    </physiologicalReaction>
</comment>
<comment type="subunit">
    <text evidence="1 2">Monomer (By similarity). Homodimer and homotetramer; disulfide-linked. Mainly monomeric but also detected as part of homodimers and homotetramers (By similarity). Interacts with 14-3-3 proteins; regulates the phosphorylation of NGB. Could interact (ferrous form) with G-alpha(i) proteins (GTP-bound form) (By similarity).</text>
</comment>
<comment type="subcellular location">
    <subcellularLocation>
        <location evidence="1">Cytoplasm</location>
        <location evidence="1">Cytosol</location>
    </subcellularLocation>
    <subcellularLocation>
        <location evidence="1">Mitochondrion matrix</location>
    </subcellularLocation>
    <text evidence="1">Enriched in mitochondrial matrix upon oxygen-glucose deprivation.</text>
</comment>
<comment type="PTM">
    <text evidence="2">Phosphorylated during hypoxia by ERK1/ERK2. Phosphorylation regulates the heme pocket hexacoordination preventing the association of His-64 with the heme metal center. Thereby, promotes the access of dioxygen and nitrite to the heme and stimulates the nitrite reductase activity. Phosphorylation during hypoxia is stabilized by 14-3-3 proteins.</text>
</comment>
<comment type="similarity">
    <text evidence="3">Belongs to the globin family.</text>
</comment>